<feature type="propeptide" id="PRO_0000024240" description="Leader sequence" evidence="2 6">
    <location>
        <begin position="1"/>
        <end position="6"/>
    </location>
</feature>
<feature type="chain" id="PRO_0000024241" description="Type II secretion system protein I">
    <location>
        <begin position="7"/>
        <end position="129"/>
    </location>
</feature>
<feature type="transmembrane region" description="Helical" evidence="1">
    <location>
        <begin position="7"/>
        <end position="27"/>
    </location>
</feature>
<feature type="modified residue" description="N-methylphenylalanine" evidence="2">
    <location>
        <position position="7"/>
    </location>
</feature>
<feature type="helix" evidence="9">
    <location>
        <begin position="37"/>
        <end position="59"/>
    </location>
</feature>
<feature type="strand" evidence="9">
    <location>
        <begin position="66"/>
        <end position="75"/>
    </location>
</feature>
<feature type="strand" evidence="9">
    <location>
        <begin position="78"/>
        <end position="88"/>
    </location>
</feature>
<feature type="strand" evidence="9">
    <location>
        <begin position="95"/>
        <end position="103"/>
    </location>
</feature>
<feature type="helix" evidence="9">
    <location>
        <begin position="113"/>
        <end position="116"/>
    </location>
</feature>
<feature type="strand" evidence="9">
    <location>
        <begin position="118"/>
        <end position="125"/>
    </location>
</feature>
<comment type="function">
    <text evidence="3 4 7">Component of the type II secretion system required for the energy-dependent secretion of extracellular factors such as proteases and toxins from the periplasm (PubMed:9282737). Part of the pseudopilus tip complex that is critical for the recognition and binding of secretion substrates (PubMed:19828448). Type II pseudopilus confers increased bacterial adhesive capabilities (PubMed:12700254).</text>
</comment>
<comment type="subunit">
    <text evidence="4 5 7">Type II secretion is composed of four main components: the outer membrane complex, the inner membrane complex, the cytoplasmic secretion ATPase and the periplasm-spanning pseudopilus. Forms the tip of the type II pseudopilus by interacting with XcpU, XcpW and XcpX (PubMed:19828448, PubMed:30346996). Interacts with core component XcpT (PubMed:9282737).</text>
</comment>
<comment type="subcellular location">
    <subcellularLocation>
        <location evidence="6">Cell inner membrane</location>
        <topology evidence="1">Single-pass membrane protein</topology>
    </subcellularLocation>
</comment>
<comment type="PTM">
    <text evidence="6">Cleaved by prepilin peptidase.</text>
</comment>
<comment type="PTM">
    <text evidence="6">Methylated by prepilin peptidase at the amino group of the N-terminal phenylalanine once the leader sequence is cleaved by prepilin peptidase.</text>
</comment>
<comment type="disruption phenotype">
    <text evidence="5">Deletion mutant results in a non-functional T2SS system.</text>
</comment>
<comment type="similarity">
    <text evidence="8">Belongs to the GSP I family.</text>
</comment>
<name>GSPI_PSEAE</name>
<proteinExistence type="evidence at protein level"/>
<organism>
    <name type="scientific">Pseudomonas aeruginosa (strain ATCC 15692 / DSM 22644 / CIP 104116 / JCM 14847 / LMG 12228 / 1C / PRS 101 / PAO1)</name>
    <dbReference type="NCBI Taxonomy" id="208964"/>
    <lineage>
        <taxon>Bacteria</taxon>
        <taxon>Pseudomonadati</taxon>
        <taxon>Pseudomonadota</taxon>
        <taxon>Gammaproteobacteria</taxon>
        <taxon>Pseudomonadales</taxon>
        <taxon>Pseudomonadaceae</taxon>
        <taxon>Pseudomonas</taxon>
    </lineage>
</organism>
<gene>
    <name type="primary">xcpV</name>
    <name type="synonym">pddC</name>
    <name type="ordered locus">PA3099</name>
</gene>
<protein>
    <recommendedName>
        <fullName>Type II secretion system protein I</fullName>
        <shortName>T2SS minor pseudopilin I</shortName>
    </recommendedName>
    <alternativeName>
        <fullName>General secretion pathway protein I</fullName>
    </alternativeName>
    <alternativeName>
        <fullName>PilD-dependent protein PddC</fullName>
    </alternativeName>
</protein>
<sequence>MKRARGFTLLEVLVALAIFAMVAASVLSASARSLQNASRLEDKTLAMWIADNRLNELQLEQTPPSSGRNQGELEFAGRRWEWRTQVDSTAEQDMRRVIVWVAAKPLGRERGSIEERAAARLVGFLGSQP</sequence>
<reference key="1">
    <citation type="journal article" date="1992" name="Mol. Microbiol.">
        <title>Protein secretion in Pseudomonas aeruginosa: characterization of seven xcp genes and processing of secretory apparatus components by prepilin peptidase.</title>
        <authorList>
            <person name="Bally M."/>
            <person name="Filloux A."/>
            <person name="Akrim M."/>
            <person name="Ball G."/>
            <person name="Lazdunski A."/>
            <person name="Tommassen J."/>
        </authorList>
    </citation>
    <scope>NUCLEOTIDE SEQUENCE [GENOMIC DNA]</scope>
    <source>
        <strain>ATCC 15692 / DSM 22644 / CIP 104116 / JCM 14847 / LMG 12228 / 1C / PRS 101 / PAO1</strain>
    </source>
</reference>
<reference key="2">
    <citation type="journal article" date="1992" name="Proc. Natl. Acad. Sci. U.S.A.">
        <title>Components of the protein-excretion apparatus of Pseudomonas aeruginosa are processed by the type IV prepilin peptidase.</title>
        <authorList>
            <person name="Nunn D.N."/>
            <person name="Lory S."/>
        </authorList>
    </citation>
    <scope>NUCLEOTIDE SEQUENCE [GENOMIC DNA]</scope>
</reference>
<reference key="3">
    <citation type="journal article" date="2000" name="Nature">
        <title>Complete genome sequence of Pseudomonas aeruginosa PAO1, an opportunistic pathogen.</title>
        <authorList>
            <person name="Stover C.K."/>
            <person name="Pham X.-Q.T."/>
            <person name="Erwin A.L."/>
            <person name="Mizoguchi S.D."/>
            <person name="Warrener P."/>
            <person name="Hickey M.J."/>
            <person name="Brinkman F.S.L."/>
            <person name="Hufnagle W.O."/>
            <person name="Kowalik D.J."/>
            <person name="Lagrou M."/>
            <person name="Garber R.L."/>
            <person name="Goltry L."/>
            <person name="Tolentino E."/>
            <person name="Westbrock-Wadman S."/>
            <person name="Yuan Y."/>
            <person name="Brody L.L."/>
            <person name="Coulter S.N."/>
            <person name="Folger K.R."/>
            <person name="Kas A."/>
            <person name="Larbig K."/>
            <person name="Lim R.M."/>
            <person name="Smith K.A."/>
            <person name="Spencer D.H."/>
            <person name="Wong G.K.-S."/>
            <person name="Wu Z."/>
            <person name="Paulsen I.T."/>
            <person name="Reizer J."/>
            <person name="Saier M.H. Jr."/>
            <person name="Hancock R.E.W."/>
            <person name="Lory S."/>
            <person name="Olson M.V."/>
        </authorList>
    </citation>
    <scope>NUCLEOTIDE SEQUENCE [LARGE SCALE GENOMIC DNA]</scope>
    <source>
        <strain>ATCC 15692 / DSM 22644 / CIP 104116 / JCM 14847 / LMG 12228 / 1C / PRS 101 / PAO1</strain>
    </source>
</reference>
<reference key="4">
    <citation type="journal article" date="1993" name="J. Bacteriol.">
        <title>Cleavage, methylation, and localization of the Pseudomonas aeruginosa export proteins XcpT, -U, -V, and -W.</title>
        <authorList>
            <person name="Nunn D.N."/>
            <person name="Lory S."/>
        </authorList>
    </citation>
    <scope>SUBCELLULAR LOCATION</scope>
    <scope>CLEAVAGE</scope>
    <scope>METHYLATION AT PHE-7</scope>
    <source>
        <strain>PAK</strain>
    </source>
</reference>
<reference key="5">
    <citation type="journal article" date="1997" name="Mol. Microbiol.">
        <title>Interactions of the components of the general secretion pathway: role of Pseudomonas aeruginosa type IV pilin subunits in complex formation and extracellular protein secretion.</title>
        <authorList>
            <person name="Lu H.M."/>
            <person name="Motley S.T."/>
            <person name="Lory S."/>
        </authorList>
    </citation>
    <scope>FUNCTION</scope>
    <scope>INTERACTION WITH XCPT</scope>
</reference>
<reference key="6">
    <citation type="journal article" date="2003" name="J. Bacteriol.">
        <title>Type II protein secretion in Pseudomonas aeruginosa: the pseudopilus is a multifibrillar and adhesive structure.</title>
        <authorList>
            <person name="Durand E."/>
            <person name="Bernadac A."/>
            <person name="Ball G."/>
            <person name="Lazdunski A."/>
            <person name="Sturgis J.N."/>
            <person name="Filloux A."/>
        </authorList>
    </citation>
    <scope>FUNCTION</scope>
    <source>
        <strain>ATCC 15692 / DSM 22644 / CIP 104116 / JCM 14847 / LMG 12228 / 1C / PRS 101 / PAO1</strain>
    </source>
</reference>
<reference key="7">
    <citation type="journal article" date="2009" name="J. Biol. Chem.">
        <title>The XcpV/GspI pseudopilin has a central role in the assembly of a quaternary complex within the T2SS pseudopilus.</title>
        <authorList>
            <person name="Douzi B."/>
            <person name="Durand E."/>
            <person name="Bernard C."/>
            <person name="Alphonse S."/>
            <person name="Cambillau C."/>
            <person name="Filloux A."/>
            <person name="Tegoni M."/>
            <person name="Voulhoux R."/>
        </authorList>
    </citation>
    <scope>FUNCTION</scope>
    <scope>INTERACTION WITH XCPU; XCPW AND XCPX</scope>
</reference>
<reference key="8">
    <citation type="journal article" date="2018" name="PLoS Pathog.">
        <title>Structure-guided disruption of the pseudopilus tip complex inhibits the Type II secretion in Pseudomonas aeruginosa.</title>
        <authorList>
            <person name="Zhang Y."/>
            <person name="Faucher F."/>
            <person name="Zhang W."/>
            <person name="Wang S."/>
            <person name="Neville N."/>
            <person name="Poole K."/>
            <person name="Zheng J."/>
            <person name="Jia Z."/>
        </authorList>
    </citation>
    <scope>X-RAY CRYSTALLOGRAPHY (2.00 ANGSTROMS) OF 33-129</scope>
    <scope>FUNCTION</scope>
    <scope>INTERACTION WITH XCPW</scope>
    <scope>DISRUPTION PHENOTYPE</scope>
</reference>
<dbReference type="EMBL" id="X62666">
    <property type="protein sequence ID" value="CAA44537.1"/>
    <property type="molecule type" value="Genomic_DNA"/>
</dbReference>
<dbReference type="EMBL" id="M80792">
    <property type="protein sequence ID" value="AAA25948.1"/>
    <property type="molecule type" value="Genomic_DNA"/>
</dbReference>
<dbReference type="EMBL" id="AE004091">
    <property type="protein sequence ID" value="AAG06487.1"/>
    <property type="molecule type" value="Genomic_DNA"/>
</dbReference>
<dbReference type="PIR" id="S25388">
    <property type="entry name" value="SKPSXV"/>
</dbReference>
<dbReference type="RefSeq" id="NP_251789.1">
    <property type="nucleotide sequence ID" value="NC_002516.2"/>
</dbReference>
<dbReference type="RefSeq" id="WP_003103528.1">
    <property type="nucleotide sequence ID" value="NZ_QZGE01000009.1"/>
</dbReference>
<dbReference type="PDB" id="5BW0">
    <property type="method" value="X-ray"/>
    <property type="resolution" value="2.00 A"/>
    <property type="chains" value="B/D/F/H=33-126"/>
</dbReference>
<dbReference type="PDB" id="5VTM">
    <property type="method" value="X-ray"/>
    <property type="resolution" value="2.04 A"/>
    <property type="chains" value="V=38-129"/>
</dbReference>
<dbReference type="PDB" id="6UTU">
    <property type="method" value="X-ray"/>
    <property type="resolution" value="2.85 A"/>
    <property type="chains" value="A/D/G=38-129"/>
</dbReference>
<dbReference type="PDBsum" id="5BW0"/>
<dbReference type="PDBsum" id="5VTM"/>
<dbReference type="PDBsum" id="6UTU"/>
<dbReference type="SMR" id="Q00516"/>
<dbReference type="FunCoup" id="Q00516">
    <property type="interactions" value="99"/>
</dbReference>
<dbReference type="STRING" id="208964.PA3099"/>
<dbReference type="PaxDb" id="208964-PA3099"/>
<dbReference type="DNASU" id="882777"/>
<dbReference type="GeneID" id="882777"/>
<dbReference type="KEGG" id="pae:PA3099"/>
<dbReference type="PATRIC" id="fig|208964.12.peg.3251"/>
<dbReference type="PseudoCAP" id="PA3099"/>
<dbReference type="HOGENOM" id="CLU_121289_5_0_6"/>
<dbReference type="InParanoid" id="Q00516"/>
<dbReference type="OrthoDB" id="6121517at2"/>
<dbReference type="PhylomeDB" id="Q00516"/>
<dbReference type="BioCyc" id="PAER208964:G1FZ6-3155-MONOMER"/>
<dbReference type="Proteomes" id="UP000002438">
    <property type="component" value="Chromosome"/>
</dbReference>
<dbReference type="GO" id="GO:0005886">
    <property type="term" value="C:plasma membrane"/>
    <property type="evidence" value="ECO:0007669"/>
    <property type="project" value="UniProtKB-SubCell"/>
</dbReference>
<dbReference type="GO" id="GO:0015627">
    <property type="term" value="C:type II protein secretion system complex"/>
    <property type="evidence" value="ECO:0000314"/>
    <property type="project" value="PseudoCAP"/>
</dbReference>
<dbReference type="GO" id="GO:0015628">
    <property type="term" value="P:protein secretion by the type II secretion system"/>
    <property type="evidence" value="ECO:0000314"/>
    <property type="project" value="PseudoCAP"/>
</dbReference>
<dbReference type="Gene3D" id="3.30.1300.30">
    <property type="entry name" value="GSPII I/J protein-like"/>
    <property type="match status" value="1"/>
</dbReference>
<dbReference type="InterPro" id="IPR012902">
    <property type="entry name" value="N_methyl_site"/>
</dbReference>
<dbReference type="InterPro" id="IPR045584">
    <property type="entry name" value="Pilin-like"/>
</dbReference>
<dbReference type="InterPro" id="IPR003413">
    <property type="entry name" value="T2SS_GspI_C"/>
</dbReference>
<dbReference type="InterPro" id="IPR010052">
    <property type="entry name" value="T2SS_protein-GspI"/>
</dbReference>
<dbReference type="NCBIfam" id="TIGR01707">
    <property type="entry name" value="gspI"/>
    <property type="match status" value="1"/>
</dbReference>
<dbReference type="NCBIfam" id="TIGR02532">
    <property type="entry name" value="IV_pilin_GFxxxE"/>
    <property type="match status" value="1"/>
</dbReference>
<dbReference type="PANTHER" id="PTHR38779">
    <property type="entry name" value="TYPE II SECRETION SYSTEM PROTEIN I-RELATED"/>
    <property type="match status" value="1"/>
</dbReference>
<dbReference type="PANTHER" id="PTHR38779:SF2">
    <property type="entry name" value="TYPE II SECRETION SYSTEM PROTEIN I-RELATED"/>
    <property type="match status" value="1"/>
</dbReference>
<dbReference type="Pfam" id="PF07963">
    <property type="entry name" value="N_methyl"/>
    <property type="match status" value="1"/>
</dbReference>
<dbReference type="Pfam" id="PF02501">
    <property type="entry name" value="T2SSI"/>
    <property type="match status" value="1"/>
</dbReference>
<dbReference type="SUPFAM" id="SSF54523">
    <property type="entry name" value="Pili subunits"/>
    <property type="match status" value="1"/>
</dbReference>
<dbReference type="PROSITE" id="PS00409">
    <property type="entry name" value="PROKAR_NTER_METHYL"/>
    <property type="match status" value="1"/>
</dbReference>
<keyword id="KW-0002">3D-structure</keyword>
<keyword id="KW-0997">Cell inner membrane</keyword>
<keyword id="KW-1003">Cell membrane</keyword>
<keyword id="KW-0472">Membrane</keyword>
<keyword id="KW-0488">Methylation</keyword>
<keyword id="KW-0653">Protein transport</keyword>
<keyword id="KW-1185">Reference proteome</keyword>
<keyword id="KW-0812">Transmembrane</keyword>
<keyword id="KW-1133">Transmembrane helix</keyword>
<keyword id="KW-0813">Transport</keyword>
<evidence type="ECO:0000255" key="1"/>
<evidence type="ECO:0000255" key="2">
    <source>
        <dbReference type="PROSITE-ProRule" id="PRU01070"/>
    </source>
</evidence>
<evidence type="ECO:0000269" key="3">
    <source>
    </source>
</evidence>
<evidence type="ECO:0000269" key="4">
    <source>
    </source>
</evidence>
<evidence type="ECO:0000269" key="5">
    <source>
    </source>
</evidence>
<evidence type="ECO:0000269" key="6">
    <source>
    </source>
</evidence>
<evidence type="ECO:0000269" key="7">
    <source>
    </source>
</evidence>
<evidence type="ECO:0000305" key="8"/>
<evidence type="ECO:0007829" key="9">
    <source>
        <dbReference type="PDB" id="5BW0"/>
    </source>
</evidence>
<accession>Q00516</accession>